<gene>
    <name evidence="1" type="primary">nfi</name>
    <name type="ordered locus">RBAM_033310</name>
</gene>
<evidence type="ECO:0000255" key="1">
    <source>
        <dbReference type="HAMAP-Rule" id="MF_00801"/>
    </source>
</evidence>
<accession>A7Z9I5</accession>
<reference key="1">
    <citation type="journal article" date="2007" name="Nat. Biotechnol.">
        <title>Comparative analysis of the complete genome sequence of the plant growth-promoting bacterium Bacillus amyloliquefaciens FZB42.</title>
        <authorList>
            <person name="Chen X.H."/>
            <person name="Koumoutsi A."/>
            <person name="Scholz R."/>
            <person name="Eisenreich A."/>
            <person name="Schneider K."/>
            <person name="Heinemeyer I."/>
            <person name="Morgenstern B."/>
            <person name="Voss B."/>
            <person name="Hess W.R."/>
            <person name="Reva O."/>
            <person name="Junge H."/>
            <person name="Voigt B."/>
            <person name="Jungblut P.R."/>
            <person name="Vater J."/>
            <person name="Suessmuth R."/>
            <person name="Liesegang H."/>
            <person name="Strittmatter A."/>
            <person name="Gottschalk G."/>
            <person name="Borriss R."/>
        </authorList>
    </citation>
    <scope>NUCLEOTIDE SEQUENCE [LARGE SCALE GENOMIC DNA]</scope>
    <source>
        <strain>DSM 23117 / BGSC 10A6 / LMG 26770 / FZB42</strain>
    </source>
</reference>
<dbReference type="EC" id="3.1.21.7" evidence="1"/>
<dbReference type="EMBL" id="CP000560">
    <property type="protein sequence ID" value="ABS75661.1"/>
    <property type="molecule type" value="Genomic_DNA"/>
</dbReference>
<dbReference type="RefSeq" id="WP_012118620.1">
    <property type="nucleotide sequence ID" value="NC_009725.2"/>
</dbReference>
<dbReference type="SMR" id="A7Z9I5"/>
<dbReference type="GeneID" id="93082474"/>
<dbReference type="KEGG" id="bay:RBAM_033310"/>
<dbReference type="HOGENOM" id="CLU_047631_1_1_9"/>
<dbReference type="Proteomes" id="UP000001120">
    <property type="component" value="Chromosome"/>
</dbReference>
<dbReference type="GO" id="GO:0005737">
    <property type="term" value="C:cytoplasm"/>
    <property type="evidence" value="ECO:0007669"/>
    <property type="project" value="UniProtKB-SubCell"/>
</dbReference>
<dbReference type="GO" id="GO:0043737">
    <property type="term" value="F:deoxyribonuclease V activity"/>
    <property type="evidence" value="ECO:0007669"/>
    <property type="project" value="UniProtKB-UniRule"/>
</dbReference>
<dbReference type="GO" id="GO:0000287">
    <property type="term" value="F:magnesium ion binding"/>
    <property type="evidence" value="ECO:0007669"/>
    <property type="project" value="UniProtKB-UniRule"/>
</dbReference>
<dbReference type="GO" id="GO:0016891">
    <property type="term" value="F:RNA endonuclease activity, producing 5'-phosphomonoesters"/>
    <property type="evidence" value="ECO:0007669"/>
    <property type="project" value="TreeGrafter"/>
</dbReference>
<dbReference type="GO" id="GO:0003727">
    <property type="term" value="F:single-stranded RNA binding"/>
    <property type="evidence" value="ECO:0007669"/>
    <property type="project" value="TreeGrafter"/>
</dbReference>
<dbReference type="GO" id="GO:0006281">
    <property type="term" value="P:DNA repair"/>
    <property type="evidence" value="ECO:0007669"/>
    <property type="project" value="UniProtKB-UniRule"/>
</dbReference>
<dbReference type="CDD" id="cd06559">
    <property type="entry name" value="Endonuclease_V"/>
    <property type="match status" value="1"/>
</dbReference>
<dbReference type="Gene3D" id="3.30.2170.10">
    <property type="entry name" value="archaeoglobus fulgidus dsm 4304 superfamily"/>
    <property type="match status" value="1"/>
</dbReference>
<dbReference type="HAMAP" id="MF_00801">
    <property type="entry name" value="Endonuclease_5"/>
    <property type="match status" value="1"/>
</dbReference>
<dbReference type="InterPro" id="IPR007581">
    <property type="entry name" value="Endonuclease-V"/>
</dbReference>
<dbReference type="PANTHER" id="PTHR28511">
    <property type="entry name" value="ENDONUCLEASE V"/>
    <property type="match status" value="1"/>
</dbReference>
<dbReference type="PANTHER" id="PTHR28511:SF1">
    <property type="entry name" value="ENDONUCLEASE V"/>
    <property type="match status" value="1"/>
</dbReference>
<dbReference type="Pfam" id="PF04493">
    <property type="entry name" value="Endonuclease_5"/>
    <property type="match status" value="1"/>
</dbReference>
<sequence>MKIHQIHDFDLNDESDFIRTQQSLIHKINLSPVIHPDSVNTCAGVDLAYWEQDGEPYGVCSIIVIDADTKEVIEKVHSMGKISVPYVSGFLAFRELPLIIEAAEKLEAEPDVFLFDGNGYLHYNHMGVATHAAFFLGKPTIGIAKTYLKIKGCDFEMPENEVGAYTDILIDGEVYGRALRTRRDVKPIFLSCGHNIDLESSYQITMKMINRDSRLPIPVRLADLETHVLRTFYRKNHV</sequence>
<proteinExistence type="inferred from homology"/>
<keyword id="KW-0963">Cytoplasm</keyword>
<keyword id="KW-0227">DNA damage</keyword>
<keyword id="KW-0234">DNA repair</keyword>
<keyword id="KW-0255">Endonuclease</keyword>
<keyword id="KW-0378">Hydrolase</keyword>
<keyword id="KW-0460">Magnesium</keyword>
<keyword id="KW-0479">Metal-binding</keyword>
<keyword id="KW-0540">Nuclease</keyword>
<name>NFI_BACVZ</name>
<organism>
    <name type="scientific">Bacillus velezensis (strain DSM 23117 / BGSC 10A6 / LMG 26770 / FZB42)</name>
    <name type="common">Bacillus amyloliquefaciens subsp. plantarum</name>
    <dbReference type="NCBI Taxonomy" id="326423"/>
    <lineage>
        <taxon>Bacteria</taxon>
        <taxon>Bacillati</taxon>
        <taxon>Bacillota</taxon>
        <taxon>Bacilli</taxon>
        <taxon>Bacillales</taxon>
        <taxon>Bacillaceae</taxon>
        <taxon>Bacillus</taxon>
        <taxon>Bacillus amyloliquefaciens group</taxon>
    </lineage>
</organism>
<comment type="function">
    <text evidence="1">DNA repair enzyme involved in the repair of deaminated bases. Selectively cleaves double-stranded DNA at the second phosphodiester bond 3' to a deoxyinosine leaving behind the intact lesion on the nicked DNA.</text>
</comment>
<comment type="catalytic activity">
    <reaction evidence="1">
        <text>Endonucleolytic cleavage at apurinic or apyrimidinic sites to products with a 5'-phosphate.</text>
        <dbReference type="EC" id="3.1.21.7"/>
    </reaction>
</comment>
<comment type="cofactor">
    <cofactor evidence="1">
        <name>Mg(2+)</name>
        <dbReference type="ChEBI" id="CHEBI:18420"/>
    </cofactor>
</comment>
<comment type="subcellular location">
    <subcellularLocation>
        <location evidence="1">Cytoplasm</location>
    </subcellularLocation>
</comment>
<comment type="similarity">
    <text evidence="1">Belongs to the endonuclease V family.</text>
</comment>
<feature type="chain" id="PRO_1000046992" description="Endonuclease V">
    <location>
        <begin position="1"/>
        <end position="238"/>
    </location>
</feature>
<feature type="binding site" evidence="1">
    <location>
        <position position="46"/>
    </location>
    <ligand>
        <name>Mg(2+)</name>
        <dbReference type="ChEBI" id="CHEBI:18420"/>
    </ligand>
</feature>
<feature type="binding site" evidence="1">
    <location>
        <position position="116"/>
    </location>
    <ligand>
        <name>Mg(2+)</name>
        <dbReference type="ChEBI" id="CHEBI:18420"/>
    </ligand>
</feature>
<feature type="site" description="Interaction with target DNA" evidence="1">
    <location>
        <position position="86"/>
    </location>
</feature>
<protein>
    <recommendedName>
        <fullName evidence="1">Endonuclease V</fullName>
        <ecNumber evidence="1">3.1.21.7</ecNumber>
    </recommendedName>
    <alternativeName>
        <fullName evidence="1">Deoxyinosine 3'endonuclease</fullName>
    </alternativeName>
    <alternativeName>
        <fullName evidence="1">Deoxyribonuclease V</fullName>
        <shortName evidence="1">DNase V</shortName>
    </alternativeName>
</protein>